<keyword id="KW-0378">Hydrolase</keyword>
<keyword id="KW-0479">Metal-binding</keyword>
<keyword id="KW-0482">Metalloprotease</keyword>
<keyword id="KW-0645">Protease</keyword>
<keyword id="KW-0862">Zinc</keyword>
<accession>A5UDB6</accession>
<feature type="chain" id="PRO_0000322690" description="UPF0758 protein CGSHiEE_07200">
    <location>
        <begin position="1"/>
        <end position="221"/>
    </location>
</feature>
<feature type="domain" description="MPN" evidence="1">
    <location>
        <begin position="99"/>
        <end position="221"/>
    </location>
</feature>
<feature type="short sequence motif" description="JAMM motif" evidence="1">
    <location>
        <begin position="170"/>
        <end position="183"/>
    </location>
</feature>
<feature type="binding site" evidence="1">
    <location>
        <position position="170"/>
    </location>
    <ligand>
        <name>Zn(2+)</name>
        <dbReference type="ChEBI" id="CHEBI:29105"/>
        <note>catalytic</note>
    </ligand>
</feature>
<feature type="binding site" evidence="1">
    <location>
        <position position="172"/>
    </location>
    <ligand>
        <name>Zn(2+)</name>
        <dbReference type="ChEBI" id="CHEBI:29105"/>
        <note>catalytic</note>
    </ligand>
</feature>
<feature type="binding site" evidence="1">
    <location>
        <position position="183"/>
    </location>
    <ligand>
        <name>Zn(2+)</name>
        <dbReference type="ChEBI" id="CHEBI:29105"/>
        <note>catalytic</note>
    </ligand>
</feature>
<name>Y7200_HAEIE</name>
<dbReference type="EMBL" id="CP000671">
    <property type="protein sequence ID" value="ABQ98767.1"/>
    <property type="status" value="ALT_INIT"/>
    <property type="molecule type" value="Genomic_DNA"/>
</dbReference>
<dbReference type="SMR" id="A5UDB6"/>
<dbReference type="KEGG" id="hip:CGSHiEE_07200"/>
<dbReference type="HOGENOM" id="CLU_073529_0_1_6"/>
<dbReference type="GO" id="GO:0046872">
    <property type="term" value="F:metal ion binding"/>
    <property type="evidence" value="ECO:0007669"/>
    <property type="project" value="UniProtKB-KW"/>
</dbReference>
<dbReference type="GO" id="GO:0008237">
    <property type="term" value="F:metallopeptidase activity"/>
    <property type="evidence" value="ECO:0007669"/>
    <property type="project" value="UniProtKB-KW"/>
</dbReference>
<dbReference type="GO" id="GO:0006508">
    <property type="term" value="P:proteolysis"/>
    <property type="evidence" value="ECO:0007669"/>
    <property type="project" value="UniProtKB-KW"/>
</dbReference>
<dbReference type="CDD" id="cd08071">
    <property type="entry name" value="MPN_DUF2466"/>
    <property type="match status" value="1"/>
</dbReference>
<dbReference type="Gene3D" id="3.40.140.10">
    <property type="entry name" value="Cytidine Deaminase, domain 2"/>
    <property type="match status" value="1"/>
</dbReference>
<dbReference type="InterPro" id="IPR037518">
    <property type="entry name" value="MPN"/>
</dbReference>
<dbReference type="InterPro" id="IPR025657">
    <property type="entry name" value="RadC_JAB"/>
</dbReference>
<dbReference type="InterPro" id="IPR010994">
    <property type="entry name" value="RuvA_2-like"/>
</dbReference>
<dbReference type="InterPro" id="IPR001405">
    <property type="entry name" value="UPF0758"/>
</dbReference>
<dbReference type="InterPro" id="IPR020891">
    <property type="entry name" value="UPF0758_CS"/>
</dbReference>
<dbReference type="InterPro" id="IPR046778">
    <property type="entry name" value="UPF0758_N"/>
</dbReference>
<dbReference type="NCBIfam" id="NF000642">
    <property type="entry name" value="PRK00024.1"/>
    <property type="match status" value="1"/>
</dbReference>
<dbReference type="NCBIfam" id="TIGR00608">
    <property type="entry name" value="radc"/>
    <property type="match status" value="1"/>
</dbReference>
<dbReference type="PANTHER" id="PTHR30471">
    <property type="entry name" value="DNA REPAIR PROTEIN RADC"/>
    <property type="match status" value="1"/>
</dbReference>
<dbReference type="PANTHER" id="PTHR30471:SF3">
    <property type="entry name" value="UPF0758 PROTEIN YEES-RELATED"/>
    <property type="match status" value="1"/>
</dbReference>
<dbReference type="Pfam" id="PF04002">
    <property type="entry name" value="RadC"/>
    <property type="match status" value="1"/>
</dbReference>
<dbReference type="Pfam" id="PF20582">
    <property type="entry name" value="UPF0758_N"/>
    <property type="match status" value="1"/>
</dbReference>
<dbReference type="SUPFAM" id="SSF47781">
    <property type="entry name" value="RuvA domain 2-like"/>
    <property type="match status" value="1"/>
</dbReference>
<dbReference type="PROSITE" id="PS50249">
    <property type="entry name" value="MPN"/>
    <property type="match status" value="1"/>
</dbReference>
<dbReference type="PROSITE" id="PS01302">
    <property type="entry name" value="UPF0758"/>
    <property type="match status" value="1"/>
</dbReference>
<reference key="1">
    <citation type="journal article" date="2007" name="Genome Biol.">
        <title>Characterization and modeling of the Haemophilus influenzae core and supragenomes based on the complete genomic sequences of Rd and 12 clinical nontypeable strains.</title>
        <authorList>
            <person name="Hogg J.S."/>
            <person name="Hu F.Z."/>
            <person name="Janto B."/>
            <person name="Boissy R."/>
            <person name="Hayes J."/>
            <person name="Keefe R."/>
            <person name="Post J.C."/>
            <person name="Ehrlich G.D."/>
        </authorList>
    </citation>
    <scope>NUCLEOTIDE SEQUENCE [LARGE SCALE GENOMIC DNA]</scope>
    <source>
        <strain>PittEE</strain>
    </source>
</reference>
<comment type="similarity">
    <text evidence="2">Belongs to the UPF0758 family.</text>
</comment>
<comment type="sequence caution" evidence="2">
    <conflict type="erroneous initiation">
        <sequence resource="EMBL-CDS" id="ABQ98767"/>
    </conflict>
</comment>
<protein>
    <recommendedName>
        <fullName>UPF0758 protein CGSHiEE_07200</fullName>
    </recommendedName>
</protein>
<organism>
    <name type="scientific">Haemophilus influenzae (strain PittEE)</name>
    <dbReference type="NCBI Taxonomy" id="374930"/>
    <lineage>
        <taxon>Bacteria</taxon>
        <taxon>Pseudomonadati</taxon>
        <taxon>Pseudomonadota</taxon>
        <taxon>Gammaproteobacteria</taxon>
        <taxon>Pasteurellales</taxon>
        <taxon>Pasteurellaceae</taxon>
        <taxon>Haemophilus</taxon>
    </lineage>
</organism>
<evidence type="ECO:0000255" key="1">
    <source>
        <dbReference type="PROSITE-ProRule" id="PRU01182"/>
    </source>
</evidence>
<evidence type="ECO:0000305" key="2"/>
<sequence>MENNDDLMPREKLLASGAKALSDYELLAIFLRTGIKGCPVISLSKNVLTHFGSLHALLSSDKKAFCSVKGLGITQFIQLQAITEMTKRYLKQEMLSTPIINDPETVKLFLLTELQHEEREVFMVLFLDNQHRLIKKERLFLGTINVSAVYPREIIKEALYCNAAALILAHNHPSGVTEPSYSDQLITKKIQDAAELMEICVLDHLIVGKSDCYSFAENCLL</sequence>
<proteinExistence type="inferred from homology"/>
<gene>
    <name type="ordered locus">CGSHiEE_07200</name>
</gene>